<comment type="function">
    <text>Required for proper 27S pre-rRNA processing and 60S ribosome subunit assembly.</text>
</comment>
<comment type="subunit">
    <text evidence="2 5">Interacts with NOP8 and RRP43. Interacts with pre-ribosome complex. May bind to RNA.</text>
</comment>
<comment type="interaction">
    <interactant intactId="EBI-12067">
        <id>Q08962</id>
    </interactant>
    <interactant intactId="EBI-12135">
        <id>Q08287</id>
        <label>NOP8</label>
    </interactant>
    <organismsDiffer>false</organismsDiffer>
    <experiments>5</experiments>
</comment>
<comment type="interaction">
    <interactant intactId="EBI-12067">
        <id>Q08962</id>
    </interactant>
    <interactant intactId="EBI-1773">
        <id>P25359</id>
        <label>RRP43</label>
    </interactant>
    <organismsDiffer>false</organismsDiffer>
    <experiments>5</experiments>
</comment>
<comment type="subcellular location">
    <subcellularLocation>
        <location>Cytoplasm</location>
    </subcellularLocation>
    <subcellularLocation>
        <location>Nucleus</location>
        <location>Nucleolus</location>
    </subcellularLocation>
</comment>
<comment type="miscellaneous">
    <text evidence="3">Present with 5170 molecules/cell in log phase SD medium.</text>
</comment>
<comment type="similarity">
    <text evidence="6">Belongs to the NIP7 family.</text>
</comment>
<name>NIP7_YEAST</name>
<proteinExistence type="evidence at protein level"/>
<sequence>MRQLTEEETKVVFEKLAGYIGRNISFLVDNKELPHVFRLQKDRVYYVPDHVAKLATSVARPNLMSLGICLGKFTKTGKFRLHITSLTVLAKHAKYKIWIKPNGEMPFLYGNHVLKAHVGKMSDDIPEHAGVIVFAMNDVPLGFGVSAKSTSESRNMQPTGIVAFRQADIGEYLRDEDTLFT</sequence>
<gene>
    <name type="primary">NIP7</name>
    <name type="ordered locus">YPL211W</name>
</gene>
<organism>
    <name type="scientific">Saccharomyces cerevisiae (strain ATCC 204508 / S288c)</name>
    <name type="common">Baker's yeast</name>
    <dbReference type="NCBI Taxonomy" id="559292"/>
    <lineage>
        <taxon>Eukaryota</taxon>
        <taxon>Fungi</taxon>
        <taxon>Dikarya</taxon>
        <taxon>Ascomycota</taxon>
        <taxon>Saccharomycotina</taxon>
        <taxon>Saccharomycetes</taxon>
        <taxon>Saccharomycetales</taxon>
        <taxon>Saccharomycetaceae</taxon>
        <taxon>Saccharomyces</taxon>
    </lineage>
</organism>
<keyword id="KW-0002">3D-structure</keyword>
<keyword id="KW-0963">Cytoplasm</keyword>
<keyword id="KW-0539">Nucleus</keyword>
<keyword id="KW-1185">Reference proteome</keyword>
<keyword id="KW-0690">Ribosome biogenesis</keyword>
<keyword id="KW-0694">RNA-binding</keyword>
<dbReference type="EMBL" id="Z73567">
    <property type="protein sequence ID" value="CAA97926.1"/>
    <property type="molecule type" value="Genomic_DNA"/>
</dbReference>
<dbReference type="EMBL" id="AY558059">
    <property type="protein sequence ID" value="AAS56385.1"/>
    <property type="molecule type" value="Genomic_DNA"/>
</dbReference>
<dbReference type="EMBL" id="BK006949">
    <property type="protein sequence ID" value="DAA11225.1"/>
    <property type="molecule type" value="Genomic_DNA"/>
</dbReference>
<dbReference type="PIR" id="S65230">
    <property type="entry name" value="S65230"/>
</dbReference>
<dbReference type="RefSeq" id="NP_015113.1">
    <property type="nucleotide sequence ID" value="NM_001184025.1"/>
</dbReference>
<dbReference type="PDB" id="6ELZ">
    <property type="method" value="EM"/>
    <property type="resolution" value="3.30 A"/>
    <property type="chains" value="l=1-181"/>
</dbReference>
<dbReference type="PDB" id="6EM5">
    <property type="method" value="EM"/>
    <property type="resolution" value="4.30 A"/>
    <property type="chains" value="l=1-181"/>
</dbReference>
<dbReference type="PDB" id="7NAC">
    <property type="method" value="EM"/>
    <property type="resolution" value="3.04 A"/>
    <property type="chains" value="l=1-181"/>
</dbReference>
<dbReference type="PDB" id="7OHR">
    <property type="method" value="EM"/>
    <property type="resolution" value="4.72 A"/>
    <property type="chains" value="l=1-181"/>
</dbReference>
<dbReference type="PDB" id="7R6K">
    <property type="method" value="EM"/>
    <property type="resolution" value="3.17 A"/>
    <property type="chains" value="l=1-181"/>
</dbReference>
<dbReference type="PDB" id="7R7A">
    <property type="method" value="EM"/>
    <property type="resolution" value="3.04 A"/>
    <property type="chains" value="l=1-181"/>
</dbReference>
<dbReference type="PDB" id="7R7C">
    <property type="method" value="EM"/>
    <property type="resolution" value="3.71 A"/>
    <property type="chains" value="l=1-181"/>
</dbReference>
<dbReference type="PDB" id="8V83">
    <property type="method" value="EM"/>
    <property type="resolution" value="2.53 A"/>
    <property type="chains" value="l=1-181"/>
</dbReference>
<dbReference type="PDB" id="8V84">
    <property type="method" value="EM"/>
    <property type="resolution" value="2.70 A"/>
    <property type="chains" value="l=1-181"/>
</dbReference>
<dbReference type="PDB" id="8V87">
    <property type="method" value="EM"/>
    <property type="resolution" value="2.66 A"/>
    <property type="chains" value="l=1-181"/>
</dbReference>
<dbReference type="PDBsum" id="6ELZ"/>
<dbReference type="PDBsum" id="6EM5"/>
<dbReference type="PDBsum" id="7NAC"/>
<dbReference type="PDBsum" id="7OHR"/>
<dbReference type="PDBsum" id="7R6K"/>
<dbReference type="PDBsum" id="7R7A"/>
<dbReference type="PDBsum" id="7R7C"/>
<dbReference type="PDBsum" id="8V83"/>
<dbReference type="PDBsum" id="8V84"/>
<dbReference type="PDBsum" id="8V87"/>
<dbReference type="EMDB" id="EMD-12906"/>
<dbReference type="EMDB" id="EMD-24269"/>
<dbReference type="EMDB" id="EMD-24280"/>
<dbReference type="EMDB" id="EMD-24296"/>
<dbReference type="EMDB" id="EMD-24297"/>
<dbReference type="EMDB" id="EMD-43017"/>
<dbReference type="EMDB" id="EMD-43021"/>
<dbReference type="EMDB" id="EMD-43027"/>
<dbReference type="SMR" id="Q08962"/>
<dbReference type="BioGRID" id="35974">
    <property type="interactions" value="388"/>
</dbReference>
<dbReference type="DIP" id="DIP-1456N"/>
<dbReference type="FunCoup" id="Q08962">
    <property type="interactions" value="1317"/>
</dbReference>
<dbReference type="IntAct" id="Q08962">
    <property type="interactions" value="87"/>
</dbReference>
<dbReference type="MINT" id="Q08962"/>
<dbReference type="STRING" id="4932.YPL211W"/>
<dbReference type="iPTMnet" id="Q08962"/>
<dbReference type="PaxDb" id="4932-YPL211W"/>
<dbReference type="PeptideAtlas" id="Q08962"/>
<dbReference type="EnsemblFungi" id="YPL211W_mRNA">
    <property type="protein sequence ID" value="YPL211W"/>
    <property type="gene ID" value="YPL211W"/>
</dbReference>
<dbReference type="GeneID" id="855890"/>
<dbReference type="KEGG" id="sce:YPL211W"/>
<dbReference type="AGR" id="SGD:S000006132"/>
<dbReference type="SGD" id="S000006132">
    <property type="gene designation" value="NIP7"/>
</dbReference>
<dbReference type="VEuPathDB" id="FungiDB:YPL211W"/>
<dbReference type="eggNOG" id="KOG3492">
    <property type="taxonomic scope" value="Eukaryota"/>
</dbReference>
<dbReference type="GeneTree" id="ENSGT00950000182971"/>
<dbReference type="HOGENOM" id="CLU_097217_0_0_1"/>
<dbReference type="InParanoid" id="Q08962"/>
<dbReference type="OMA" id="LISMGTC"/>
<dbReference type="OrthoDB" id="27490at2759"/>
<dbReference type="BioCyc" id="YEAST:G3O-34102-MONOMER"/>
<dbReference type="BioGRID-ORCS" id="855890">
    <property type="hits" value="0 hits in 10 CRISPR screens"/>
</dbReference>
<dbReference type="CD-CODE" id="BDAE0F88">
    <property type="entry name" value="Nucleolus"/>
</dbReference>
<dbReference type="CD-CODE" id="E03F929F">
    <property type="entry name" value="Stress granule"/>
</dbReference>
<dbReference type="PRO" id="PR:Q08962"/>
<dbReference type="Proteomes" id="UP000002311">
    <property type="component" value="Chromosome XVI"/>
</dbReference>
<dbReference type="RNAct" id="Q08962">
    <property type="molecule type" value="protein"/>
</dbReference>
<dbReference type="GO" id="GO:0005737">
    <property type="term" value="C:cytoplasm"/>
    <property type="evidence" value="ECO:0000314"/>
    <property type="project" value="SGD"/>
</dbReference>
<dbReference type="GO" id="GO:0005730">
    <property type="term" value="C:nucleolus"/>
    <property type="evidence" value="ECO:0007005"/>
    <property type="project" value="SGD"/>
</dbReference>
<dbReference type="GO" id="GO:0005634">
    <property type="term" value="C:nucleus"/>
    <property type="evidence" value="ECO:0000314"/>
    <property type="project" value="SGD"/>
</dbReference>
<dbReference type="GO" id="GO:0030687">
    <property type="term" value="C:preribosome, large subunit precursor"/>
    <property type="evidence" value="ECO:0000314"/>
    <property type="project" value="SGD"/>
</dbReference>
<dbReference type="GO" id="GO:0003723">
    <property type="term" value="F:RNA binding"/>
    <property type="evidence" value="ECO:0007669"/>
    <property type="project" value="UniProtKB-KW"/>
</dbReference>
<dbReference type="GO" id="GO:1902626">
    <property type="term" value="P:assembly of large subunit precursor of preribosome"/>
    <property type="evidence" value="ECO:0000315"/>
    <property type="project" value="SGD"/>
</dbReference>
<dbReference type="GO" id="GO:0000463">
    <property type="term" value="P:maturation of LSU-rRNA from tricistronic rRNA transcript (SSU-rRNA, 5.8S rRNA, LSU-rRNA)"/>
    <property type="evidence" value="ECO:0000315"/>
    <property type="project" value="SGD"/>
</dbReference>
<dbReference type="GO" id="GO:0042273">
    <property type="term" value="P:ribosomal large subunit biogenesis"/>
    <property type="evidence" value="ECO:0000315"/>
    <property type="project" value="SGD"/>
</dbReference>
<dbReference type="CDD" id="cd21146">
    <property type="entry name" value="Nip7_N_euk"/>
    <property type="match status" value="1"/>
</dbReference>
<dbReference type="CDD" id="cd21151">
    <property type="entry name" value="PUA_Nip7-like"/>
    <property type="match status" value="1"/>
</dbReference>
<dbReference type="FunFam" id="2.30.130.10:FF:000002">
    <property type="entry name" value="60S ribosome subunit biogenesis protein NIP7 homolog"/>
    <property type="match status" value="1"/>
</dbReference>
<dbReference type="FunFam" id="3.10.450.220:FF:000001">
    <property type="entry name" value="60S ribosome subunit biogenesis protein NIP7 homolog"/>
    <property type="match status" value="1"/>
</dbReference>
<dbReference type="Gene3D" id="3.10.450.220">
    <property type="match status" value="1"/>
</dbReference>
<dbReference type="Gene3D" id="2.30.130.10">
    <property type="entry name" value="PUA domain"/>
    <property type="match status" value="1"/>
</dbReference>
<dbReference type="InterPro" id="IPR040598">
    <property type="entry name" value="NIP7_N"/>
</dbReference>
<dbReference type="InterPro" id="IPR055359">
    <property type="entry name" value="Nip7_N_euk"/>
</dbReference>
<dbReference type="InterPro" id="IPR002478">
    <property type="entry name" value="PUA"/>
</dbReference>
<dbReference type="InterPro" id="IPR015947">
    <property type="entry name" value="PUA-like_sf"/>
</dbReference>
<dbReference type="InterPro" id="IPR036974">
    <property type="entry name" value="PUA_sf"/>
</dbReference>
<dbReference type="InterPro" id="IPR016686">
    <property type="entry name" value="Ribosomal_synth_fac_NIP7"/>
</dbReference>
<dbReference type="InterPro" id="IPR005155">
    <property type="entry name" value="UPF0113_PUA"/>
</dbReference>
<dbReference type="PANTHER" id="PTHR23415">
    <property type="entry name" value="CYCLIN-DEPENDENT KINASES REGULATORY SUBUNIT/60S RIBOSOME SUBUNIT BIOGENESIS PROTEIN NIP7"/>
    <property type="match status" value="1"/>
</dbReference>
<dbReference type="Pfam" id="PF17833">
    <property type="entry name" value="pre-PUA_NIP7"/>
    <property type="match status" value="1"/>
</dbReference>
<dbReference type="Pfam" id="PF03657">
    <property type="entry name" value="UPF0113"/>
    <property type="match status" value="1"/>
</dbReference>
<dbReference type="PIRSF" id="PIRSF017190">
    <property type="entry name" value="Rbsml_synth_fac_NIP7"/>
    <property type="match status" value="1"/>
</dbReference>
<dbReference type="SMART" id="SM00359">
    <property type="entry name" value="PUA"/>
    <property type="match status" value="1"/>
</dbReference>
<dbReference type="SUPFAM" id="SSF88802">
    <property type="entry name" value="Pre-PUA domain"/>
    <property type="match status" value="1"/>
</dbReference>
<dbReference type="SUPFAM" id="SSF88697">
    <property type="entry name" value="PUA domain-like"/>
    <property type="match status" value="1"/>
</dbReference>
<dbReference type="PROSITE" id="PS50890">
    <property type="entry name" value="PUA"/>
    <property type="match status" value="1"/>
</dbReference>
<reference key="1">
    <citation type="journal article" date="1997" name="Nature">
        <title>The nucleotide sequence of Saccharomyces cerevisiae chromosome XVI.</title>
        <authorList>
            <person name="Bussey H."/>
            <person name="Storms R.K."/>
            <person name="Ahmed A."/>
            <person name="Albermann K."/>
            <person name="Allen E."/>
            <person name="Ansorge W."/>
            <person name="Araujo R."/>
            <person name="Aparicio A."/>
            <person name="Barrell B.G."/>
            <person name="Badcock K."/>
            <person name="Benes V."/>
            <person name="Botstein D."/>
            <person name="Bowman S."/>
            <person name="Brueckner M."/>
            <person name="Carpenter J."/>
            <person name="Cherry J.M."/>
            <person name="Chung E."/>
            <person name="Churcher C.M."/>
            <person name="Coster F."/>
            <person name="Davis K."/>
            <person name="Davis R.W."/>
            <person name="Dietrich F.S."/>
            <person name="Delius H."/>
            <person name="DiPaolo T."/>
            <person name="Dubois E."/>
            <person name="Duesterhoeft A."/>
            <person name="Duncan M."/>
            <person name="Floeth M."/>
            <person name="Fortin N."/>
            <person name="Friesen J.D."/>
            <person name="Fritz C."/>
            <person name="Goffeau A."/>
            <person name="Hall J."/>
            <person name="Hebling U."/>
            <person name="Heumann K."/>
            <person name="Hilbert H."/>
            <person name="Hillier L.W."/>
            <person name="Hunicke-Smith S."/>
            <person name="Hyman R.W."/>
            <person name="Johnston M."/>
            <person name="Kalman S."/>
            <person name="Kleine K."/>
            <person name="Komp C."/>
            <person name="Kurdi O."/>
            <person name="Lashkari D."/>
            <person name="Lew H."/>
            <person name="Lin A."/>
            <person name="Lin D."/>
            <person name="Louis E.J."/>
            <person name="Marathe R."/>
            <person name="Messenguy F."/>
            <person name="Mewes H.-W."/>
            <person name="Mirtipati S."/>
            <person name="Moestl D."/>
            <person name="Mueller-Auer S."/>
            <person name="Namath A."/>
            <person name="Nentwich U."/>
            <person name="Oefner P."/>
            <person name="Pearson D."/>
            <person name="Petel F.X."/>
            <person name="Pohl T.M."/>
            <person name="Purnelle B."/>
            <person name="Rajandream M.A."/>
            <person name="Rechmann S."/>
            <person name="Rieger M."/>
            <person name="Riles L."/>
            <person name="Roberts D."/>
            <person name="Schaefer M."/>
            <person name="Scharfe M."/>
            <person name="Scherens B."/>
            <person name="Schramm S."/>
            <person name="Schroeder M."/>
            <person name="Sdicu A.-M."/>
            <person name="Tettelin H."/>
            <person name="Urrestarazu L.A."/>
            <person name="Ushinsky S."/>
            <person name="Vierendeels F."/>
            <person name="Vissers S."/>
            <person name="Voss H."/>
            <person name="Walsh S.V."/>
            <person name="Wambutt R."/>
            <person name="Wang Y."/>
            <person name="Wedler E."/>
            <person name="Wedler H."/>
            <person name="Winnett E."/>
            <person name="Zhong W.-W."/>
            <person name="Zollner A."/>
            <person name="Vo D.H."/>
            <person name="Hani J."/>
        </authorList>
    </citation>
    <scope>NUCLEOTIDE SEQUENCE [LARGE SCALE GENOMIC DNA]</scope>
    <source>
        <strain>ATCC 204508 / S288c</strain>
    </source>
</reference>
<reference key="2">
    <citation type="journal article" date="2014" name="G3 (Bethesda)">
        <title>The reference genome sequence of Saccharomyces cerevisiae: Then and now.</title>
        <authorList>
            <person name="Engel S.R."/>
            <person name="Dietrich F.S."/>
            <person name="Fisk D.G."/>
            <person name="Binkley G."/>
            <person name="Balakrishnan R."/>
            <person name="Costanzo M.C."/>
            <person name="Dwight S.S."/>
            <person name="Hitz B.C."/>
            <person name="Karra K."/>
            <person name="Nash R.S."/>
            <person name="Weng S."/>
            <person name="Wong E.D."/>
            <person name="Lloyd P."/>
            <person name="Skrzypek M.S."/>
            <person name="Miyasato S.R."/>
            <person name="Simison M."/>
            <person name="Cherry J.M."/>
        </authorList>
    </citation>
    <scope>GENOME REANNOTATION</scope>
    <source>
        <strain>ATCC 204508 / S288c</strain>
    </source>
</reference>
<reference key="3">
    <citation type="journal article" date="2007" name="Genome Res.">
        <title>Approaching a complete repository of sequence-verified protein-encoding clones for Saccharomyces cerevisiae.</title>
        <authorList>
            <person name="Hu Y."/>
            <person name="Rolfs A."/>
            <person name="Bhullar B."/>
            <person name="Murthy T.V.S."/>
            <person name="Zhu C."/>
            <person name="Berger M.F."/>
            <person name="Camargo A.A."/>
            <person name="Kelley F."/>
            <person name="McCarron S."/>
            <person name="Jepson D."/>
            <person name="Richardson A."/>
            <person name="Raphael J."/>
            <person name="Moreira D."/>
            <person name="Taycher E."/>
            <person name="Zuo D."/>
            <person name="Mohr S."/>
            <person name="Kane M.F."/>
            <person name="Williamson J."/>
            <person name="Simpson A.J.G."/>
            <person name="Bulyk M.L."/>
            <person name="Harlow E."/>
            <person name="Marsischky G."/>
            <person name="Kolodner R.D."/>
            <person name="LaBaer J."/>
        </authorList>
    </citation>
    <scope>NUCLEOTIDE SEQUENCE [GENOMIC DNA]</scope>
    <source>
        <strain>ATCC 204508 / S288c</strain>
    </source>
</reference>
<reference key="4">
    <citation type="journal article" date="1997" name="Mol. Cell. Biol.">
        <title>Saccharomyces cerevisiae Nip7p is required for efficient 60S ribosome subunit biogenesis.</title>
        <authorList>
            <person name="Zanchin N.I.T."/>
            <person name="Roberts P."/>
            <person name="DeSilva A."/>
            <person name="Sherman F."/>
            <person name="Goldfarb D.S."/>
        </authorList>
    </citation>
    <scope>CHARACTERIZATION</scope>
</reference>
<reference key="5">
    <citation type="journal article" date="1999" name="Mol. Cell. Biol.">
        <title>Nip7p interacts with Nop8p, an essential nucleolar protein required for 60S ribosome biogenesis, and the exosome subunit Rrp43p.</title>
        <authorList>
            <person name="Zanchin N.I.T."/>
            <person name="Goldfarb D.S."/>
        </authorList>
    </citation>
    <scope>CHARACTERIZATION</scope>
    <scope>INTERACTION WITH NOP8 AND RRP43</scope>
</reference>
<reference key="6">
    <citation type="journal article" date="2001" name="Mol. Cell">
        <title>Identification of a 60S preribosomal particle that is closely linked to nuclear export.</title>
        <authorList>
            <person name="Bassler J."/>
            <person name="Grandi P."/>
            <person name="Gadal O."/>
            <person name="Lessmann T."/>
            <person name="Petfalski E."/>
            <person name="Tollervey D."/>
            <person name="Lechner J."/>
            <person name="Hurt E."/>
        </authorList>
    </citation>
    <scope>INTERACTION WITH PRE-RIBOSOME COMPLEX</scope>
</reference>
<reference key="7">
    <citation type="journal article" date="2003" name="Nature">
        <title>Global analysis of protein expression in yeast.</title>
        <authorList>
            <person name="Ghaemmaghami S."/>
            <person name="Huh W.-K."/>
            <person name="Bower K."/>
            <person name="Howson R.W."/>
            <person name="Belle A."/>
            <person name="Dephoure N."/>
            <person name="O'Shea E.K."/>
            <person name="Weissman J.S."/>
        </authorList>
    </citation>
    <scope>LEVEL OF PROTEIN EXPRESSION [LARGE SCALE ANALYSIS]</scope>
</reference>
<reference key="8">
    <citation type="journal article" date="2007" name="Biochemistry">
        <title>Structural insights into the interaction of the Nip7 PUA domain with polyuridine RNA.</title>
        <authorList>
            <person name="Coltri P.P."/>
            <person name="Guimaraes B.G."/>
            <person name="Granato D.C."/>
            <person name="Luz J.S."/>
            <person name="Teixeira E.C."/>
            <person name="Oliveira C.C."/>
            <person name="Zanchin N.I."/>
        </authorList>
    </citation>
    <scope>RNA-BINDING</scope>
    <scope>MUTAGENESIS OF 161-ILE--PHE-164</scope>
</reference>
<evidence type="ECO:0000255" key="1">
    <source>
        <dbReference type="PROSITE-ProRule" id="PRU00161"/>
    </source>
</evidence>
<evidence type="ECO:0000269" key="2">
    <source>
    </source>
</evidence>
<evidence type="ECO:0000269" key="3">
    <source>
    </source>
</evidence>
<evidence type="ECO:0000269" key="4">
    <source>
    </source>
</evidence>
<evidence type="ECO:0000269" key="5">
    <source>
    </source>
</evidence>
<evidence type="ECO:0000305" key="6"/>
<evidence type="ECO:0007829" key="7">
    <source>
        <dbReference type="PDB" id="7R6K"/>
    </source>
</evidence>
<feature type="chain" id="PRO_0000218776" description="60S ribosome subunit biogenesis protein NIP7">
    <location>
        <begin position="1"/>
        <end position="181"/>
    </location>
</feature>
<feature type="domain" description="PUA" evidence="1">
    <location>
        <begin position="94"/>
        <end position="170"/>
    </location>
</feature>
<feature type="mutagenesis site" description="Reduces RNA-binding ability in vitro." evidence="4">
    <original>IVAF</original>
    <variation>AVAA</variation>
    <location>
        <begin position="161"/>
        <end position="164"/>
    </location>
</feature>
<feature type="helix" evidence="7">
    <location>
        <begin position="6"/>
        <end position="17"/>
    </location>
</feature>
<feature type="helix" evidence="7">
    <location>
        <begin position="23"/>
        <end position="25"/>
    </location>
</feature>
<feature type="turn" evidence="7">
    <location>
        <begin position="26"/>
        <end position="28"/>
    </location>
</feature>
<feature type="strand" evidence="7">
    <location>
        <begin position="31"/>
        <end position="33"/>
    </location>
</feature>
<feature type="strand" evidence="7">
    <location>
        <begin position="35"/>
        <end position="40"/>
    </location>
</feature>
<feature type="strand" evidence="7">
    <location>
        <begin position="43"/>
        <end position="48"/>
    </location>
</feature>
<feature type="helix" evidence="7">
    <location>
        <begin position="49"/>
        <end position="53"/>
    </location>
</feature>
<feature type="helix" evidence="7">
    <location>
        <begin position="54"/>
        <end position="57"/>
    </location>
</feature>
<feature type="helix" evidence="7">
    <location>
        <begin position="60"/>
        <end position="62"/>
    </location>
</feature>
<feature type="strand" evidence="7">
    <location>
        <begin position="63"/>
        <end position="73"/>
    </location>
</feature>
<feature type="strand" evidence="7">
    <location>
        <begin position="79"/>
        <end position="81"/>
    </location>
</feature>
<feature type="helix" evidence="7">
    <location>
        <begin position="83"/>
        <end position="85"/>
    </location>
</feature>
<feature type="helix" evidence="7">
    <location>
        <begin position="86"/>
        <end position="91"/>
    </location>
</feature>
<feature type="strand" evidence="7">
    <location>
        <begin position="94"/>
        <end position="99"/>
    </location>
</feature>
<feature type="helix" evidence="7">
    <location>
        <begin position="101"/>
        <end position="107"/>
    </location>
</feature>
<feature type="turn" evidence="7">
    <location>
        <begin position="108"/>
        <end position="110"/>
    </location>
</feature>
<feature type="turn" evidence="7">
    <location>
        <begin position="115"/>
        <end position="117"/>
    </location>
</feature>
<feature type="strand" evidence="7">
    <location>
        <begin position="130"/>
        <end position="135"/>
    </location>
</feature>
<feature type="strand" evidence="7">
    <location>
        <begin position="140"/>
        <end position="148"/>
    </location>
</feature>
<feature type="turn" evidence="7">
    <location>
        <begin position="150"/>
        <end position="153"/>
    </location>
</feature>
<feature type="strand" evidence="7">
    <location>
        <begin position="154"/>
        <end position="156"/>
    </location>
</feature>
<feature type="strand" evidence="7">
    <location>
        <begin position="161"/>
        <end position="168"/>
    </location>
</feature>
<feature type="helix" evidence="7">
    <location>
        <begin position="170"/>
        <end position="175"/>
    </location>
</feature>
<protein>
    <recommendedName>
        <fullName>60S ribosome subunit biogenesis protein NIP7</fullName>
    </recommendedName>
    <alternativeName>
        <fullName>Nuclear import protein 7</fullName>
    </alternativeName>
</protein>
<accession>Q08962</accession>
<accession>D6W3F9</accession>